<accession>Q8P7C5</accession>
<keyword id="KW-0030">Aminoacyl-tRNA synthetase</keyword>
<keyword id="KW-0067">ATP-binding</keyword>
<keyword id="KW-0963">Cytoplasm</keyword>
<keyword id="KW-0436">Ligase</keyword>
<keyword id="KW-0547">Nucleotide-binding</keyword>
<keyword id="KW-0648">Protein biosynthesis</keyword>
<keyword id="KW-1185">Reference proteome</keyword>
<dbReference type="EC" id="6.1.1.17" evidence="1"/>
<dbReference type="EMBL" id="AE008922">
    <property type="protein sequence ID" value="AAM41958.1"/>
    <property type="molecule type" value="Genomic_DNA"/>
</dbReference>
<dbReference type="RefSeq" id="NP_638034.1">
    <property type="nucleotide sequence ID" value="NC_003902.1"/>
</dbReference>
<dbReference type="RefSeq" id="WP_011037816.1">
    <property type="nucleotide sequence ID" value="NC_003902.1"/>
</dbReference>
<dbReference type="SMR" id="Q8P7C5"/>
<dbReference type="STRING" id="190485.XCC2686"/>
<dbReference type="EnsemblBacteria" id="AAM41958">
    <property type="protein sequence ID" value="AAM41958"/>
    <property type="gene ID" value="XCC2686"/>
</dbReference>
<dbReference type="KEGG" id="xcc:XCC2686"/>
<dbReference type="PATRIC" id="fig|190485.4.peg.2863"/>
<dbReference type="eggNOG" id="COG0008">
    <property type="taxonomic scope" value="Bacteria"/>
</dbReference>
<dbReference type="HOGENOM" id="CLU_015768_6_3_6"/>
<dbReference type="OrthoDB" id="9807503at2"/>
<dbReference type="Proteomes" id="UP000001010">
    <property type="component" value="Chromosome"/>
</dbReference>
<dbReference type="GO" id="GO:0005829">
    <property type="term" value="C:cytosol"/>
    <property type="evidence" value="ECO:0000318"/>
    <property type="project" value="GO_Central"/>
</dbReference>
<dbReference type="GO" id="GO:0005524">
    <property type="term" value="F:ATP binding"/>
    <property type="evidence" value="ECO:0007669"/>
    <property type="project" value="UniProtKB-UniRule"/>
</dbReference>
<dbReference type="GO" id="GO:0004818">
    <property type="term" value="F:glutamate-tRNA ligase activity"/>
    <property type="evidence" value="ECO:0000318"/>
    <property type="project" value="GO_Central"/>
</dbReference>
<dbReference type="GO" id="GO:0000049">
    <property type="term" value="F:tRNA binding"/>
    <property type="evidence" value="ECO:0007669"/>
    <property type="project" value="InterPro"/>
</dbReference>
<dbReference type="GO" id="GO:0008270">
    <property type="term" value="F:zinc ion binding"/>
    <property type="evidence" value="ECO:0007669"/>
    <property type="project" value="InterPro"/>
</dbReference>
<dbReference type="GO" id="GO:0006424">
    <property type="term" value="P:glutamyl-tRNA aminoacylation"/>
    <property type="evidence" value="ECO:0000318"/>
    <property type="project" value="GO_Central"/>
</dbReference>
<dbReference type="CDD" id="cd00808">
    <property type="entry name" value="GluRS_core"/>
    <property type="match status" value="1"/>
</dbReference>
<dbReference type="FunFam" id="3.40.50.620:FF:000007">
    <property type="entry name" value="Glutamate--tRNA ligase"/>
    <property type="match status" value="1"/>
</dbReference>
<dbReference type="Gene3D" id="1.10.10.350">
    <property type="match status" value="1"/>
</dbReference>
<dbReference type="Gene3D" id="3.40.50.620">
    <property type="entry name" value="HUPs"/>
    <property type="match status" value="1"/>
</dbReference>
<dbReference type="HAMAP" id="MF_00022">
    <property type="entry name" value="Glu_tRNA_synth_type1"/>
    <property type="match status" value="1"/>
</dbReference>
<dbReference type="InterPro" id="IPR045462">
    <property type="entry name" value="aa-tRNA-synth_I_cd-bd"/>
</dbReference>
<dbReference type="InterPro" id="IPR020751">
    <property type="entry name" value="aa-tRNA-synth_I_codon-bd_sub2"/>
</dbReference>
<dbReference type="InterPro" id="IPR001412">
    <property type="entry name" value="aa-tRNA-synth_I_CS"/>
</dbReference>
<dbReference type="InterPro" id="IPR008925">
    <property type="entry name" value="aa_tRNA-synth_I_cd-bd_sf"/>
</dbReference>
<dbReference type="InterPro" id="IPR004527">
    <property type="entry name" value="Glu-tRNA-ligase_bac/mito"/>
</dbReference>
<dbReference type="InterPro" id="IPR000924">
    <property type="entry name" value="Glu/Gln-tRNA-synth"/>
</dbReference>
<dbReference type="InterPro" id="IPR020058">
    <property type="entry name" value="Glu/Gln-tRNA-synth_Ib_cat-dom"/>
</dbReference>
<dbReference type="InterPro" id="IPR049940">
    <property type="entry name" value="GluQ/Sye"/>
</dbReference>
<dbReference type="InterPro" id="IPR033910">
    <property type="entry name" value="GluRS_core"/>
</dbReference>
<dbReference type="InterPro" id="IPR014729">
    <property type="entry name" value="Rossmann-like_a/b/a_fold"/>
</dbReference>
<dbReference type="NCBIfam" id="TIGR00464">
    <property type="entry name" value="gltX_bact"/>
    <property type="match status" value="1"/>
</dbReference>
<dbReference type="PANTHER" id="PTHR43311">
    <property type="entry name" value="GLUTAMATE--TRNA LIGASE"/>
    <property type="match status" value="1"/>
</dbReference>
<dbReference type="PANTHER" id="PTHR43311:SF2">
    <property type="entry name" value="GLUTAMATE--TRNA LIGASE, MITOCHONDRIAL-RELATED"/>
    <property type="match status" value="1"/>
</dbReference>
<dbReference type="Pfam" id="PF19269">
    <property type="entry name" value="Anticodon_2"/>
    <property type="match status" value="1"/>
</dbReference>
<dbReference type="Pfam" id="PF00749">
    <property type="entry name" value="tRNA-synt_1c"/>
    <property type="match status" value="1"/>
</dbReference>
<dbReference type="PRINTS" id="PR00987">
    <property type="entry name" value="TRNASYNTHGLU"/>
</dbReference>
<dbReference type="SUPFAM" id="SSF48163">
    <property type="entry name" value="An anticodon-binding domain of class I aminoacyl-tRNA synthetases"/>
    <property type="match status" value="1"/>
</dbReference>
<dbReference type="SUPFAM" id="SSF52374">
    <property type="entry name" value="Nucleotidylyl transferase"/>
    <property type="match status" value="1"/>
</dbReference>
<dbReference type="PROSITE" id="PS00178">
    <property type="entry name" value="AA_TRNA_LIGASE_I"/>
    <property type="match status" value="1"/>
</dbReference>
<comment type="function">
    <text evidence="1">Catalyzes the attachment of glutamate to tRNA(Glu) in a two-step reaction: glutamate is first activated by ATP to form Glu-AMP and then transferred to the acceptor end of tRNA(Glu).</text>
</comment>
<comment type="catalytic activity">
    <reaction evidence="1">
        <text>tRNA(Glu) + L-glutamate + ATP = L-glutamyl-tRNA(Glu) + AMP + diphosphate</text>
        <dbReference type="Rhea" id="RHEA:23540"/>
        <dbReference type="Rhea" id="RHEA-COMP:9663"/>
        <dbReference type="Rhea" id="RHEA-COMP:9680"/>
        <dbReference type="ChEBI" id="CHEBI:29985"/>
        <dbReference type="ChEBI" id="CHEBI:30616"/>
        <dbReference type="ChEBI" id="CHEBI:33019"/>
        <dbReference type="ChEBI" id="CHEBI:78442"/>
        <dbReference type="ChEBI" id="CHEBI:78520"/>
        <dbReference type="ChEBI" id="CHEBI:456215"/>
        <dbReference type="EC" id="6.1.1.17"/>
    </reaction>
</comment>
<comment type="subunit">
    <text evidence="1">Monomer.</text>
</comment>
<comment type="subcellular location">
    <subcellularLocation>
        <location evidence="1">Cytoplasm</location>
    </subcellularLocation>
</comment>
<comment type="similarity">
    <text evidence="1">Belongs to the class-I aminoacyl-tRNA synthetase family. Glutamate--tRNA ligase type 1 subfamily.</text>
</comment>
<feature type="chain" id="PRO_0000119704" description="Glutamate--tRNA ligase">
    <location>
        <begin position="1"/>
        <end position="467"/>
    </location>
</feature>
<feature type="short sequence motif" description="'HIGH' region" evidence="1">
    <location>
        <begin position="9"/>
        <end position="19"/>
    </location>
</feature>
<feature type="short sequence motif" description="'KMSKS' region" evidence="1">
    <location>
        <begin position="237"/>
        <end position="241"/>
    </location>
</feature>
<feature type="binding site" evidence="1">
    <location>
        <position position="240"/>
    </location>
    <ligand>
        <name>ATP</name>
        <dbReference type="ChEBI" id="CHEBI:30616"/>
    </ligand>
</feature>
<proteinExistence type="inferred from homology"/>
<name>SYE_XANCP</name>
<gene>
    <name evidence="1" type="primary">gltX</name>
    <name type="synonym">gluS</name>
    <name type="ordered locus">XCC2686</name>
</gene>
<sequence length="467" mass="51983">MTCRTRFAPSPTGYLHIGGARTALYCWLEARHRGGQFVLRIEDTDRERSTQVAIDAILEAMEWLGLGYDEGPIYQTQRIARYQEVAEQLLAQGKAYYAYETREELDAMREAAMAKQEKPRYNGAAREQQLPYRDDPNRVIRFKNPLAGTVVFDDLIKGRIEIANSELDDMVIFRPDGYPTYNFAVVVDDWDMGITEVIRGDDHINNTPRQINIYEALGAPVPKFAHMPMILDEQGAKLSKRTGAADVMQYKDAGYLPHALINYLARLGWSHGDQELFSQQELLDLFDVKDVNSKAARLDMAKLGWVNQHYLKTDDPASIAPQLEYQLRKLGIDVAAGPAAADVVVALRERVQTLKEMAEKAVVWYQPLETYDEAAVIKHLKLGAEVPLGKAREMLAALNEWSVENVSAALHAAAAALELGMGKVAQPLRVAITGTQVSPDISQTVYLAGREGALKRIDAALIKIGAA</sequence>
<evidence type="ECO:0000255" key="1">
    <source>
        <dbReference type="HAMAP-Rule" id="MF_00022"/>
    </source>
</evidence>
<reference key="1">
    <citation type="journal article" date="2002" name="Nature">
        <title>Comparison of the genomes of two Xanthomonas pathogens with differing host specificities.</title>
        <authorList>
            <person name="da Silva A.C.R."/>
            <person name="Ferro J.A."/>
            <person name="Reinach F.C."/>
            <person name="Farah C.S."/>
            <person name="Furlan L.R."/>
            <person name="Quaggio R.B."/>
            <person name="Monteiro-Vitorello C.B."/>
            <person name="Van Sluys M.A."/>
            <person name="Almeida N.F. Jr."/>
            <person name="Alves L.M.C."/>
            <person name="do Amaral A.M."/>
            <person name="Bertolini M.C."/>
            <person name="Camargo L.E.A."/>
            <person name="Camarotte G."/>
            <person name="Cannavan F."/>
            <person name="Cardozo J."/>
            <person name="Chambergo F."/>
            <person name="Ciapina L.P."/>
            <person name="Cicarelli R.M.B."/>
            <person name="Coutinho L.L."/>
            <person name="Cursino-Santos J.R."/>
            <person name="El-Dorry H."/>
            <person name="Faria J.B."/>
            <person name="Ferreira A.J.S."/>
            <person name="Ferreira R.C.C."/>
            <person name="Ferro M.I.T."/>
            <person name="Formighieri E.F."/>
            <person name="Franco M.C."/>
            <person name="Greggio C.C."/>
            <person name="Gruber A."/>
            <person name="Katsuyama A.M."/>
            <person name="Kishi L.T."/>
            <person name="Leite R.P."/>
            <person name="Lemos E.G.M."/>
            <person name="Lemos M.V.F."/>
            <person name="Locali E.C."/>
            <person name="Machado M.A."/>
            <person name="Madeira A.M.B.N."/>
            <person name="Martinez-Rossi N.M."/>
            <person name="Martins E.C."/>
            <person name="Meidanis J."/>
            <person name="Menck C.F.M."/>
            <person name="Miyaki C.Y."/>
            <person name="Moon D.H."/>
            <person name="Moreira L.M."/>
            <person name="Novo M.T.M."/>
            <person name="Okura V.K."/>
            <person name="Oliveira M.C."/>
            <person name="Oliveira V.R."/>
            <person name="Pereira H.A."/>
            <person name="Rossi A."/>
            <person name="Sena J.A.D."/>
            <person name="Silva C."/>
            <person name="de Souza R.F."/>
            <person name="Spinola L.A.F."/>
            <person name="Takita M.A."/>
            <person name="Tamura R.E."/>
            <person name="Teixeira E.C."/>
            <person name="Tezza R.I.D."/>
            <person name="Trindade dos Santos M."/>
            <person name="Truffi D."/>
            <person name="Tsai S.M."/>
            <person name="White F.F."/>
            <person name="Setubal J.C."/>
            <person name="Kitajima J.P."/>
        </authorList>
    </citation>
    <scope>NUCLEOTIDE SEQUENCE [LARGE SCALE GENOMIC DNA]</scope>
    <source>
        <strain>ATCC 33913 / DSM 3586 / NCPPB 528 / LMG 568 / P 25</strain>
    </source>
</reference>
<organism>
    <name type="scientific">Xanthomonas campestris pv. campestris (strain ATCC 33913 / DSM 3586 / NCPPB 528 / LMG 568 / P 25)</name>
    <dbReference type="NCBI Taxonomy" id="190485"/>
    <lineage>
        <taxon>Bacteria</taxon>
        <taxon>Pseudomonadati</taxon>
        <taxon>Pseudomonadota</taxon>
        <taxon>Gammaproteobacteria</taxon>
        <taxon>Lysobacterales</taxon>
        <taxon>Lysobacteraceae</taxon>
        <taxon>Xanthomonas</taxon>
    </lineage>
</organism>
<protein>
    <recommendedName>
        <fullName evidence="1">Glutamate--tRNA ligase</fullName>
        <ecNumber evidence="1">6.1.1.17</ecNumber>
    </recommendedName>
    <alternativeName>
        <fullName evidence="1">Glutamyl-tRNA synthetase</fullName>
        <shortName evidence="1">GluRS</shortName>
    </alternativeName>
</protein>